<comment type="function">
    <text evidence="1 2">Probable substrate-specific adapter of an E3 ubiquitin-protein ligase complex which mediates the ubiquitination and subsequent proteasomal degradation of target proteins. May have a role in synapse differentiation and growth (By similarity).</text>
</comment>
<comment type="pathway">
    <text evidence="2">Protein modification; protein ubiquitination.</text>
</comment>
<proteinExistence type="inferred from homology"/>
<name>KLHDB_DROPE</name>
<dbReference type="EMBL" id="CH479188">
    <property type="protein sequence ID" value="EDW40377.1"/>
    <property type="molecule type" value="Genomic_DNA"/>
</dbReference>
<dbReference type="RefSeq" id="XP_002021221.1">
    <property type="nucleotide sequence ID" value="XM_002021185.1"/>
</dbReference>
<dbReference type="SMR" id="B4GRJ2"/>
<dbReference type="STRING" id="7234.B4GRJ2"/>
<dbReference type="EnsemblMetazoa" id="FBtr0190828">
    <property type="protein sequence ID" value="FBpp0189320"/>
    <property type="gene ID" value="FBgn0162797"/>
</dbReference>
<dbReference type="EnsemblMetazoa" id="XM_026989708.1">
    <property type="protein sequence ID" value="XP_026845509.1"/>
    <property type="gene ID" value="LOC6596064"/>
</dbReference>
<dbReference type="GeneID" id="6596064"/>
<dbReference type="KEGG" id="dpe:6596064"/>
<dbReference type="CTD" id="53556"/>
<dbReference type="eggNOG" id="KOG4441">
    <property type="taxonomic scope" value="Eukaryota"/>
</dbReference>
<dbReference type="HOGENOM" id="CLU_004253_14_2_1"/>
<dbReference type="OMA" id="CAVFNNL"/>
<dbReference type="OrthoDB" id="45365at2759"/>
<dbReference type="PhylomeDB" id="B4GRJ2"/>
<dbReference type="UniPathway" id="UPA00143"/>
<dbReference type="Proteomes" id="UP000008744">
    <property type="component" value="Unassembled WGS sequence"/>
</dbReference>
<dbReference type="GO" id="GO:0031463">
    <property type="term" value="C:Cul3-RING ubiquitin ligase complex"/>
    <property type="evidence" value="ECO:0007669"/>
    <property type="project" value="EnsemblMetazoa"/>
</dbReference>
<dbReference type="GO" id="GO:0003779">
    <property type="term" value="F:actin binding"/>
    <property type="evidence" value="ECO:0007669"/>
    <property type="project" value="UniProtKB-KW"/>
</dbReference>
<dbReference type="GO" id="GO:1990756">
    <property type="term" value="F:ubiquitin-like ligase-substrate adaptor activity"/>
    <property type="evidence" value="ECO:0007669"/>
    <property type="project" value="EnsemblMetazoa"/>
</dbReference>
<dbReference type="GO" id="GO:0045886">
    <property type="term" value="P:negative regulation of synaptic assembly at neuromuscular junction"/>
    <property type="evidence" value="ECO:0000250"/>
    <property type="project" value="UniProtKB"/>
</dbReference>
<dbReference type="GO" id="GO:0043161">
    <property type="term" value="P:proteasome-mediated ubiquitin-dependent protein catabolic process"/>
    <property type="evidence" value="ECO:0007669"/>
    <property type="project" value="EnsemblMetazoa"/>
</dbReference>
<dbReference type="GO" id="GO:0016567">
    <property type="term" value="P:protein ubiquitination"/>
    <property type="evidence" value="ECO:0007669"/>
    <property type="project" value="UniProtKB-UniPathway"/>
</dbReference>
<dbReference type="CDD" id="cd18459">
    <property type="entry name" value="BACK_KLHL20"/>
    <property type="match status" value="1"/>
</dbReference>
<dbReference type="CDD" id="cd18249">
    <property type="entry name" value="BTB_POZ_KLHL20_KLEIP"/>
    <property type="match status" value="1"/>
</dbReference>
<dbReference type="FunFam" id="1.25.40.420:FF:000001">
    <property type="entry name" value="Kelch-like family member 12"/>
    <property type="match status" value="1"/>
</dbReference>
<dbReference type="FunFam" id="2.120.10.80:FF:000006">
    <property type="entry name" value="Kelch-like family member 20"/>
    <property type="match status" value="1"/>
</dbReference>
<dbReference type="FunFam" id="3.30.710.10:FF:000001">
    <property type="entry name" value="Kelch-like family member 20"/>
    <property type="match status" value="1"/>
</dbReference>
<dbReference type="Gene3D" id="1.25.40.420">
    <property type="match status" value="1"/>
</dbReference>
<dbReference type="Gene3D" id="2.120.10.80">
    <property type="entry name" value="Kelch-type beta propeller"/>
    <property type="match status" value="1"/>
</dbReference>
<dbReference type="Gene3D" id="3.30.710.10">
    <property type="entry name" value="Potassium Channel Kv1.1, Chain A"/>
    <property type="match status" value="1"/>
</dbReference>
<dbReference type="InterPro" id="IPR011705">
    <property type="entry name" value="BACK"/>
</dbReference>
<dbReference type="InterPro" id="IPR017096">
    <property type="entry name" value="BTB-kelch_protein"/>
</dbReference>
<dbReference type="InterPro" id="IPR000210">
    <property type="entry name" value="BTB/POZ_dom"/>
</dbReference>
<dbReference type="InterPro" id="IPR011043">
    <property type="entry name" value="Gal_Oxase/kelch_b-propeller"/>
</dbReference>
<dbReference type="InterPro" id="IPR015915">
    <property type="entry name" value="Kelch-typ_b-propeller"/>
</dbReference>
<dbReference type="InterPro" id="IPR006652">
    <property type="entry name" value="Kelch_1"/>
</dbReference>
<dbReference type="InterPro" id="IPR011333">
    <property type="entry name" value="SKP1/BTB/POZ_sf"/>
</dbReference>
<dbReference type="PANTHER" id="PTHR24412">
    <property type="entry name" value="KELCH PROTEIN"/>
    <property type="match status" value="1"/>
</dbReference>
<dbReference type="PANTHER" id="PTHR24412:SF451">
    <property type="entry name" value="KELCH-LIKE PROTEIN 20"/>
    <property type="match status" value="1"/>
</dbReference>
<dbReference type="Pfam" id="PF07707">
    <property type="entry name" value="BACK"/>
    <property type="match status" value="1"/>
</dbReference>
<dbReference type="Pfam" id="PF00651">
    <property type="entry name" value="BTB"/>
    <property type="match status" value="1"/>
</dbReference>
<dbReference type="Pfam" id="PF01344">
    <property type="entry name" value="Kelch_1"/>
    <property type="match status" value="6"/>
</dbReference>
<dbReference type="PIRSF" id="PIRSF037037">
    <property type="entry name" value="Kelch-like_protein_gigaxonin"/>
    <property type="match status" value="1"/>
</dbReference>
<dbReference type="SMART" id="SM00875">
    <property type="entry name" value="BACK"/>
    <property type="match status" value="1"/>
</dbReference>
<dbReference type="SMART" id="SM00225">
    <property type="entry name" value="BTB"/>
    <property type="match status" value="1"/>
</dbReference>
<dbReference type="SMART" id="SM00612">
    <property type="entry name" value="Kelch"/>
    <property type="match status" value="6"/>
</dbReference>
<dbReference type="SUPFAM" id="SSF50965">
    <property type="entry name" value="Galactose oxidase, central domain"/>
    <property type="match status" value="1"/>
</dbReference>
<dbReference type="SUPFAM" id="SSF117281">
    <property type="entry name" value="Kelch motif"/>
    <property type="match status" value="1"/>
</dbReference>
<dbReference type="SUPFAM" id="SSF54695">
    <property type="entry name" value="POZ domain"/>
    <property type="match status" value="1"/>
</dbReference>
<dbReference type="PROSITE" id="PS50097">
    <property type="entry name" value="BTB"/>
    <property type="match status" value="1"/>
</dbReference>
<sequence>MGDLPGSTGGGSGPAAAGNASGNSSSAGNTGLGVAGTTGVDRPPSPARLSHTSEKHPKVTLTELNMLRRHRELCDVVLNVGGRKIFAHRVILSACSSYFCAMFTGELEESRQTEVTIRDIDENAMELLIDFCYTAHIIVEESNVQTLLPAACLLQLVEIQDICCEFLKRQLDPTNCLGIRAFADTHSCRELLRIADKFTQHNFQEVMESEEFLLLPVGQLVDIICSDELNVRSEEQVFNAVMSWLKYNVAERRQHLAQVLQHVRLPLLSPKFLVGTVGSDLLVRSDEACRDLVDEAKNYLLLPQERPLMQGPRTRPRKPTRRGEVLFAVGGWCSGDAIASVERFDPQTNDWKMVAPMSKRRCGVGVAVLNDLLYAVGGHDGQSYLNSIERYDPQTNQWSCDVAPTTSCRTSVGVAVLDGFLYAVGGQDGVQCLNHVERYDPKENKWSKVAPMTTRRLGVAVAVLGGFLYAIGGSDGQCPLNTVERYDPRQNKWVAVSPMSTRRKHLGCAVFNNYIYAVGGRDDCMELSSAERYNPLTNTWSPIVAMTSRRSGVGLAVVNGQLYAVGGFDGSAYLKTIEVYDPETNQWRLCGCMNYRRLGGGVGVMRAPQTENYMWCENSLKQHNNPPS</sequence>
<evidence type="ECO:0000250" key="1">
    <source>
        <dbReference type="UniProtKB" id="Q9VUU5"/>
    </source>
</evidence>
<evidence type="ECO:0000250" key="2">
    <source>
        <dbReference type="UniProtKB" id="Q9Y2M5"/>
    </source>
</evidence>
<evidence type="ECO:0000255" key="3"/>
<evidence type="ECO:0000255" key="4">
    <source>
        <dbReference type="PROSITE-ProRule" id="PRU00037"/>
    </source>
</evidence>
<evidence type="ECO:0000256" key="5">
    <source>
        <dbReference type="SAM" id="MobiDB-lite"/>
    </source>
</evidence>
<evidence type="ECO:0000312" key="6">
    <source>
        <dbReference type="EMBL" id="EDW40377.1"/>
    </source>
</evidence>
<accession>B4GRJ2</accession>
<feature type="chain" id="PRO_0000379950" description="Kelch-like protein diablo">
    <location>
        <begin position="1"/>
        <end position="628"/>
    </location>
</feature>
<feature type="domain" description="BTB" evidence="4">
    <location>
        <begin position="74"/>
        <end position="141"/>
    </location>
</feature>
<feature type="domain" description="BACK" evidence="3">
    <location>
        <begin position="176"/>
        <end position="278"/>
    </location>
</feature>
<feature type="repeat" description="Kelch 1" evidence="3">
    <location>
        <begin position="325"/>
        <end position="371"/>
    </location>
</feature>
<feature type="repeat" description="Kelch 2" evidence="3">
    <location>
        <begin position="373"/>
        <end position="419"/>
    </location>
</feature>
<feature type="repeat" description="Kelch 3" evidence="3">
    <location>
        <begin position="420"/>
        <end position="466"/>
    </location>
</feature>
<feature type="repeat" description="Kelch 4" evidence="3">
    <location>
        <begin position="468"/>
        <end position="513"/>
    </location>
</feature>
<feature type="repeat" description="Kelch 5" evidence="3">
    <location>
        <begin position="515"/>
        <end position="560"/>
    </location>
</feature>
<feature type="repeat" description="Kelch 6" evidence="3">
    <location>
        <begin position="561"/>
        <end position="607"/>
    </location>
</feature>
<feature type="region of interest" description="Disordered" evidence="5">
    <location>
        <begin position="1"/>
        <end position="56"/>
    </location>
</feature>
<feature type="compositionally biased region" description="Low complexity" evidence="5">
    <location>
        <begin position="14"/>
        <end position="29"/>
    </location>
</feature>
<organism>
    <name type="scientific">Drosophila persimilis</name>
    <name type="common">Fruit fly</name>
    <dbReference type="NCBI Taxonomy" id="7234"/>
    <lineage>
        <taxon>Eukaryota</taxon>
        <taxon>Metazoa</taxon>
        <taxon>Ecdysozoa</taxon>
        <taxon>Arthropoda</taxon>
        <taxon>Hexapoda</taxon>
        <taxon>Insecta</taxon>
        <taxon>Pterygota</taxon>
        <taxon>Neoptera</taxon>
        <taxon>Endopterygota</taxon>
        <taxon>Diptera</taxon>
        <taxon>Brachycera</taxon>
        <taxon>Muscomorpha</taxon>
        <taxon>Ephydroidea</taxon>
        <taxon>Drosophilidae</taxon>
        <taxon>Drosophila</taxon>
        <taxon>Sophophora</taxon>
    </lineage>
</organism>
<protein>
    <recommendedName>
        <fullName evidence="1">Kelch-like protein diablo</fullName>
    </recommendedName>
</protein>
<reference evidence="6" key="1">
    <citation type="journal article" date="2007" name="Nature">
        <title>Evolution of genes and genomes on the Drosophila phylogeny.</title>
        <authorList>
            <consortium name="Drosophila 12 genomes consortium"/>
        </authorList>
    </citation>
    <scope>NUCLEOTIDE SEQUENCE [LARGE SCALE GENOMIC DNA]</scope>
    <source>
        <strain>MSH-3 / Tucson 14011-0111.49</strain>
    </source>
</reference>
<keyword id="KW-0009">Actin-binding</keyword>
<keyword id="KW-0880">Kelch repeat</keyword>
<keyword id="KW-1185">Reference proteome</keyword>
<keyword id="KW-0677">Repeat</keyword>
<keyword id="KW-0833">Ubl conjugation pathway</keyword>
<gene>
    <name evidence="1" type="primary">dbo</name>
    <name type="ORF">GL25213</name>
</gene>